<evidence type="ECO:0000255" key="1"/>
<evidence type="ECO:0000255" key="2">
    <source>
        <dbReference type="PROSITE-ProRule" id="PRU00441"/>
    </source>
</evidence>
<evidence type="ECO:0000269" key="3">
    <source>
    </source>
</evidence>
<evidence type="ECO:0000269" key="4">
    <source>
    </source>
</evidence>
<evidence type="ECO:0000269" key="5">
    <source>
    </source>
</evidence>
<evidence type="ECO:0000303" key="6">
    <source>
    </source>
</evidence>
<evidence type="ECO:0000303" key="7">
    <source>
    </source>
</evidence>
<evidence type="ECO:0000305" key="8"/>
<evidence type="ECO:0000305" key="9">
    <source>
    </source>
</evidence>
<comment type="function">
    <text evidence="4 5 8">Part of the ABC transporter complex OppABCDF involved in the uptake of oligopeptides (PubMed:1901616). Probably responsible for the translocation of the substrate across the membrane (Probable). Required for sporulation and genetic competence (PubMed:1899858).</text>
</comment>
<comment type="subunit">
    <text evidence="9">The complex is composed of two ATP-binding proteins (OppD and OppF), two transmembrane proteins (OppB and OppC) and a solute-binding protein (OppA).</text>
</comment>
<comment type="subcellular location">
    <subcellularLocation>
        <location evidence="8">Cell membrane</location>
        <topology evidence="1">Multi-pass membrane protein</topology>
    </subcellularLocation>
</comment>
<comment type="induction">
    <text evidence="3">Positively regulated by TnrA under nitrogen-limited conditions.</text>
</comment>
<comment type="disruption phenotype">
    <text evidence="5">Inactivation of the gene results in a sporulation-defective phenotype (PubMed:1901616). Disruption confers resistance to bialaphos (PubMed:1901616).</text>
</comment>
<comment type="similarity">
    <text evidence="8">Belongs to the binding-protein-dependent transport system permease family. OppBC subfamily.</text>
</comment>
<keyword id="KW-1003">Cell membrane</keyword>
<keyword id="KW-0178">Competence</keyword>
<keyword id="KW-0472">Membrane</keyword>
<keyword id="KW-0571">Peptide transport</keyword>
<keyword id="KW-0653">Protein transport</keyword>
<keyword id="KW-1185">Reference proteome</keyword>
<keyword id="KW-0749">Sporulation</keyword>
<keyword id="KW-0812">Transmembrane</keyword>
<keyword id="KW-1133">Transmembrane helix</keyword>
<keyword id="KW-0813">Transport</keyword>
<accession>P24139</accession>
<accession>P24692</accession>
<dbReference type="EMBL" id="X56347">
    <property type="protein sequence ID" value="CAA39789.1"/>
    <property type="molecule type" value="Genomic_DNA"/>
</dbReference>
<dbReference type="EMBL" id="M57689">
    <property type="protein sequence ID" value="AAA62690.1"/>
    <property type="molecule type" value="Genomic_DNA"/>
</dbReference>
<dbReference type="EMBL" id="AL009126">
    <property type="protein sequence ID" value="CAB13002.1"/>
    <property type="molecule type" value="Genomic_DNA"/>
</dbReference>
<dbReference type="PIR" id="A69669">
    <property type="entry name" value="A69669"/>
</dbReference>
<dbReference type="RefSeq" id="NP_389027.1">
    <property type="nucleotide sequence ID" value="NC_000964.3"/>
</dbReference>
<dbReference type="RefSeq" id="WP_003232954.1">
    <property type="nucleotide sequence ID" value="NZ_OZ025638.1"/>
</dbReference>
<dbReference type="SMR" id="P24139"/>
<dbReference type="FunCoup" id="P24139">
    <property type="interactions" value="429"/>
</dbReference>
<dbReference type="STRING" id="224308.BSU11450"/>
<dbReference type="PaxDb" id="224308-BSU11450"/>
<dbReference type="EnsemblBacteria" id="CAB13002">
    <property type="protein sequence ID" value="CAB13002"/>
    <property type="gene ID" value="BSU_11450"/>
</dbReference>
<dbReference type="GeneID" id="86874378"/>
<dbReference type="GeneID" id="936396"/>
<dbReference type="KEGG" id="bsu:BSU11450"/>
<dbReference type="PATRIC" id="fig|224308.179.peg.1231"/>
<dbReference type="eggNOG" id="COG1173">
    <property type="taxonomic scope" value="Bacteria"/>
</dbReference>
<dbReference type="InParanoid" id="P24139"/>
<dbReference type="OrthoDB" id="9797472at2"/>
<dbReference type="PhylomeDB" id="P24139"/>
<dbReference type="BioCyc" id="BSUB:BSU11450-MONOMER"/>
<dbReference type="Proteomes" id="UP000001570">
    <property type="component" value="Chromosome"/>
</dbReference>
<dbReference type="GO" id="GO:0005886">
    <property type="term" value="C:plasma membrane"/>
    <property type="evidence" value="ECO:0000318"/>
    <property type="project" value="GO_Central"/>
</dbReference>
<dbReference type="GO" id="GO:0022857">
    <property type="term" value="F:transmembrane transporter activity"/>
    <property type="evidence" value="ECO:0000318"/>
    <property type="project" value="GO_Central"/>
</dbReference>
<dbReference type="GO" id="GO:0030420">
    <property type="term" value="P:establishment of competence for transformation"/>
    <property type="evidence" value="ECO:0007669"/>
    <property type="project" value="UniProtKB-KW"/>
</dbReference>
<dbReference type="GO" id="GO:0015833">
    <property type="term" value="P:peptide transport"/>
    <property type="evidence" value="ECO:0007669"/>
    <property type="project" value="UniProtKB-KW"/>
</dbReference>
<dbReference type="GO" id="GO:0015031">
    <property type="term" value="P:protein transport"/>
    <property type="evidence" value="ECO:0007669"/>
    <property type="project" value="UniProtKB-KW"/>
</dbReference>
<dbReference type="GO" id="GO:0030435">
    <property type="term" value="P:sporulation resulting in formation of a cellular spore"/>
    <property type="evidence" value="ECO:0007669"/>
    <property type="project" value="UniProtKB-KW"/>
</dbReference>
<dbReference type="CDD" id="cd06261">
    <property type="entry name" value="TM_PBP2"/>
    <property type="match status" value="1"/>
</dbReference>
<dbReference type="Gene3D" id="1.10.3720.10">
    <property type="entry name" value="MetI-like"/>
    <property type="match status" value="1"/>
</dbReference>
<dbReference type="InterPro" id="IPR050366">
    <property type="entry name" value="BP-dependent_transpt_permease"/>
</dbReference>
<dbReference type="InterPro" id="IPR000515">
    <property type="entry name" value="MetI-like"/>
</dbReference>
<dbReference type="InterPro" id="IPR035906">
    <property type="entry name" value="MetI-like_sf"/>
</dbReference>
<dbReference type="InterPro" id="IPR025966">
    <property type="entry name" value="OppC_N"/>
</dbReference>
<dbReference type="PANTHER" id="PTHR43386">
    <property type="entry name" value="OLIGOPEPTIDE TRANSPORT SYSTEM PERMEASE PROTEIN APPC"/>
    <property type="match status" value="1"/>
</dbReference>
<dbReference type="PANTHER" id="PTHR43386:SF22">
    <property type="entry name" value="OLIGOPEPTIDE TRANSPORT SYSTEM PERMEASE PROTEIN OPPC"/>
    <property type="match status" value="1"/>
</dbReference>
<dbReference type="Pfam" id="PF00528">
    <property type="entry name" value="BPD_transp_1"/>
    <property type="match status" value="1"/>
</dbReference>
<dbReference type="Pfam" id="PF12911">
    <property type="entry name" value="OppC_N"/>
    <property type="match status" value="1"/>
</dbReference>
<dbReference type="SUPFAM" id="SSF161098">
    <property type="entry name" value="MetI-like"/>
    <property type="match status" value="1"/>
</dbReference>
<dbReference type="PROSITE" id="PS50928">
    <property type="entry name" value="ABC_TM1"/>
    <property type="match status" value="1"/>
</dbReference>
<reference key="1">
    <citation type="journal article" date="1991" name="Mol. Microbiol.">
        <title>The oligopeptide transport system of Bacillus subtilis plays a role in the initiation of sporulation.</title>
        <authorList>
            <person name="Perego M."/>
            <person name="Higgins C.F."/>
            <person name="Pearce S.R."/>
            <person name="Gallagher M.P."/>
            <person name="Hoch J.A."/>
        </authorList>
    </citation>
    <scope>NUCLEOTIDE SEQUENCE [GENOMIC DNA]</scope>
    <scope>FUNCTION</scope>
    <scope>SUBUNIT</scope>
    <scope>DISRUPTION PHENOTYPE</scope>
    <source>
        <strain>168</strain>
    </source>
</reference>
<reference key="2">
    <citation type="journal article" date="1991" name="J. Bacteriol.">
        <title>The spo0K locus of Bacillus subtilis is homologous to the oligopeptide permease locus and is required for sporulation and competence.</title>
        <authorList>
            <person name="Rudner D.Z."/>
            <person name="Ledeaux J.R."/>
            <person name="Ireton K."/>
            <person name="Grossman A.D."/>
        </authorList>
    </citation>
    <scope>NUCLEOTIDE SEQUENCE [GENOMIC DNA]</scope>
    <scope>FUNCTION</scope>
    <source>
        <strain>168</strain>
    </source>
</reference>
<reference key="3">
    <citation type="journal article" date="1997" name="Nature">
        <title>The complete genome sequence of the Gram-positive bacterium Bacillus subtilis.</title>
        <authorList>
            <person name="Kunst F."/>
            <person name="Ogasawara N."/>
            <person name="Moszer I."/>
            <person name="Albertini A.M."/>
            <person name="Alloni G."/>
            <person name="Azevedo V."/>
            <person name="Bertero M.G."/>
            <person name="Bessieres P."/>
            <person name="Bolotin A."/>
            <person name="Borchert S."/>
            <person name="Borriss R."/>
            <person name="Boursier L."/>
            <person name="Brans A."/>
            <person name="Braun M."/>
            <person name="Brignell S.C."/>
            <person name="Bron S."/>
            <person name="Brouillet S."/>
            <person name="Bruschi C.V."/>
            <person name="Caldwell B."/>
            <person name="Capuano V."/>
            <person name="Carter N.M."/>
            <person name="Choi S.-K."/>
            <person name="Codani J.-J."/>
            <person name="Connerton I.F."/>
            <person name="Cummings N.J."/>
            <person name="Daniel R.A."/>
            <person name="Denizot F."/>
            <person name="Devine K.M."/>
            <person name="Duesterhoeft A."/>
            <person name="Ehrlich S.D."/>
            <person name="Emmerson P.T."/>
            <person name="Entian K.-D."/>
            <person name="Errington J."/>
            <person name="Fabret C."/>
            <person name="Ferrari E."/>
            <person name="Foulger D."/>
            <person name="Fritz C."/>
            <person name="Fujita M."/>
            <person name="Fujita Y."/>
            <person name="Fuma S."/>
            <person name="Galizzi A."/>
            <person name="Galleron N."/>
            <person name="Ghim S.-Y."/>
            <person name="Glaser P."/>
            <person name="Goffeau A."/>
            <person name="Golightly E.J."/>
            <person name="Grandi G."/>
            <person name="Guiseppi G."/>
            <person name="Guy B.J."/>
            <person name="Haga K."/>
            <person name="Haiech J."/>
            <person name="Harwood C.R."/>
            <person name="Henaut A."/>
            <person name="Hilbert H."/>
            <person name="Holsappel S."/>
            <person name="Hosono S."/>
            <person name="Hullo M.-F."/>
            <person name="Itaya M."/>
            <person name="Jones L.-M."/>
            <person name="Joris B."/>
            <person name="Karamata D."/>
            <person name="Kasahara Y."/>
            <person name="Klaerr-Blanchard M."/>
            <person name="Klein C."/>
            <person name="Kobayashi Y."/>
            <person name="Koetter P."/>
            <person name="Koningstein G."/>
            <person name="Krogh S."/>
            <person name="Kumano M."/>
            <person name="Kurita K."/>
            <person name="Lapidus A."/>
            <person name="Lardinois S."/>
            <person name="Lauber J."/>
            <person name="Lazarevic V."/>
            <person name="Lee S.-M."/>
            <person name="Levine A."/>
            <person name="Liu H."/>
            <person name="Masuda S."/>
            <person name="Mauel C."/>
            <person name="Medigue C."/>
            <person name="Medina N."/>
            <person name="Mellado R.P."/>
            <person name="Mizuno M."/>
            <person name="Moestl D."/>
            <person name="Nakai S."/>
            <person name="Noback M."/>
            <person name="Noone D."/>
            <person name="O'Reilly M."/>
            <person name="Ogawa K."/>
            <person name="Ogiwara A."/>
            <person name="Oudega B."/>
            <person name="Park S.-H."/>
            <person name="Parro V."/>
            <person name="Pohl T.M."/>
            <person name="Portetelle D."/>
            <person name="Porwollik S."/>
            <person name="Prescott A.M."/>
            <person name="Presecan E."/>
            <person name="Pujic P."/>
            <person name="Purnelle B."/>
            <person name="Rapoport G."/>
            <person name="Rey M."/>
            <person name="Reynolds S."/>
            <person name="Rieger M."/>
            <person name="Rivolta C."/>
            <person name="Rocha E."/>
            <person name="Roche B."/>
            <person name="Rose M."/>
            <person name="Sadaie Y."/>
            <person name="Sato T."/>
            <person name="Scanlan E."/>
            <person name="Schleich S."/>
            <person name="Schroeter R."/>
            <person name="Scoffone F."/>
            <person name="Sekiguchi J."/>
            <person name="Sekowska A."/>
            <person name="Seror S.J."/>
            <person name="Serror P."/>
            <person name="Shin B.-S."/>
            <person name="Soldo B."/>
            <person name="Sorokin A."/>
            <person name="Tacconi E."/>
            <person name="Takagi T."/>
            <person name="Takahashi H."/>
            <person name="Takemaru K."/>
            <person name="Takeuchi M."/>
            <person name="Tamakoshi A."/>
            <person name="Tanaka T."/>
            <person name="Terpstra P."/>
            <person name="Tognoni A."/>
            <person name="Tosato V."/>
            <person name="Uchiyama S."/>
            <person name="Vandenbol M."/>
            <person name="Vannier F."/>
            <person name="Vassarotti A."/>
            <person name="Viari A."/>
            <person name="Wambutt R."/>
            <person name="Wedler E."/>
            <person name="Wedler H."/>
            <person name="Weitzenegger T."/>
            <person name="Winters P."/>
            <person name="Wipat A."/>
            <person name="Yamamoto H."/>
            <person name="Yamane K."/>
            <person name="Yasumoto K."/>
            <person name="Yata K."/>
            <person name="Yoshida K."/>
            <person name="Yoshikawa H.-F."/>
            <person name="Zumstein E."/>
            <person name="Yoshikawa H."/>
            <person name="Danchin A."/>
        </authorList>
    </citation>
    <scope>NUCLEOTIDE SEQUENCE [LARGE SCALE GENOMIC DNA]</scope>
    <source>
        <strain>168</strain>
    </source>
</reference>
<reference key="4">
    <citation type="journal article" date="2003" name="Mol. Microbiol.">
        <title>Identification of additional TnrA-regulated genes of Bacillus subtilis associated with a TnrA box.</title>
        <authorList>
            <person name="Yoshida K."/>
            <person name="Yamaguchi H."/>
            <person name="Kinehara M."/>
            <person name="Ohki Y.-H."/>
            <person name="Nakaura Y."/>
            <person name="Fujita Y."/>
        </authorList>
    </citation>
    <scope>INDUCTION BY TNRA</scope>
</reference>
<protein>
    <recommendedName>
        <fullName evidence="8">Oligopeptide transport system permease protein OppC</fullName>
    </recommendedName>
    <alternativeName>
        <fullName>Stage 0 sporulation protein KC</fullName>
    </alternativeName>
</protein>
<proteinExistence type="evidence at protein level"/>
<name>OPPC_BACSU</name>
<sequence>MQNIPKNMFEPAAANAGDAEKISKKSLSLWKDAMLRFRSNKLAMVGLIIIVLIILMAIFAPMFSRYDYSTTNLLNADKPPSKDHWFGTDDLGRDIFVRTWVGARISIFIGVAAAVLDLLIGVIWGSISGFRGGRTDEIMMRIADILWAVPSLLMVILLMVVLPKGLFTIIIAMTITGWINMARIVRGQVLQLKNQEYVLASQTLGAKTSRLLFKHIVPNAMGSILVTMTLTVPTAIFTEAFLSYLGLGVPAPLASWGTMASDGLPALTYYPWRLFFPAGFICITMFGFNVVGDGLRDALDPKLRK</sequence>
<feature type="chain" id="PRO_0000060134" description="Oligopeptide transport system permease protein OppC">
    <location>
        <begin position="1"/>
        <end position="305"/>
    </location>
</feature>
<feature type="transmembrane region" description="Helical" evidence="2">
    <location>
        <begin position="43"/>
        <end position="63"/>
    </location>
</feature>
<feature type="transmembrane region" description="Helical" evidence="2">
    <location>
        <begin position="105"/>
        <end position="125"/>
    </location>
</feature>
<feature type="transmembrane region" description="Helical" evidence="2">
    <location>
        <begin position="166"/>
        <end position="185"/>
    </location>
</feature>
<feature type="transmembrane region" description="Helical" evidence="2">
    <location>
        <begin position="212"/>
        <end position="232"/>
    </location>
</feature>
<feature type="transmembrane region" description="Helical" evidence="2">
    <location>
        <begin position="236"/>
        <end position="256"/>
    </location>
</feature>
<feature type="transmembrane region" description="Helical" evidence="2">
    <location>
        <begin position="274"/>
        <end position="294"/>
    </location>
</feature>
<feature type="domain" description="ABC transmembrane type-1" evidence="2">
    <location>
        <begin position="103"/>
        <end position="292"/>
    </location>
</feature>
<feature type="sequence conflict" description="In Ref. 2; AAA62690." evidence="8" ref="2">
    <original>R</original>
    <variation>P</variation>
    <location>
        <position position="36"/>
    </location>
</feature>
<gene>
    <name evidence="7" type="primary">oppC</name>
    <name evidence="6" type="synonym">spo0KC</name>
    <name type="ordered locus">BSU11450</name>
</gene>
<organism>
    <name type="scientific">Bacillus subtilis (strain 168)</name>
    <dbReference type="NCBI Taxonomy" id="224308"/>
    <lineage>
        <taxon>Bacteria</taxon>
        <taxon>Bacillati</taxon>
        <taxon>Bacillota</taxon>
        <taxon>Bacilli</taxon>
        <taxon>Bacillales</taxon>
        <taxon>Bacillaceae</taxon>
        <taxon>Bacillus</taxon>
    </lineage>
</organism>